<comment type="subcellular location">
    <subcellularLocation>
        <location evidence="1">Cytoplasm</location>
    </subcellularLocation>
</comment>
<comment type="similarity">
    <text evidence="1">Belongs to the TACO1 family. YeeN subfamily.</text>
</comment>
<name>Y1481_BREBN</name>
<proteinExistence type="inferred from homology"/>
<evidence type="ECO:0000255" key="1">
    <source>
        <dbReference type="HAMAP-Rule" id="MF_00918"/>
    </source>
</evidence>
<protein>
    <recommendedName>
        <fullName evidence="1">Probable transcriptional regulatory protein BBR47_14810</fullName>
    </recommendedName>
</protein>
<organism>
    <name type="scientific">Brevibacillus brevis (strain 47 / JCM 6285 / NBRC 100599)</name>
    <dbReference type="NCBI Taxonomy" id="358681"/>
    <lineage>
        <taxon>Bacteria</taxon>
        <taxon>Bacillati</taxon>
        <taxon>Bacillota</taxon>
        <taxon>Bacilli</taxon>
        <taxon>Bacillales</taxon>
        <taxon>Paenibacillaceae</taxon>
        <taxon>Brevibacillus</taxon>
    </lineage>
</organism>
<dbReference type="EMBL" id="AP008955">
    <property type="protein sequence ID" value="BAH42458.1"/>
    <property type="molecule type" value="Genomic_DNA"/>
</dbReference>
<dbReference type="RefSeq" id="WP_012685207.1">
    <property type="nucleotide sequence ID" value="NC_012491.1"/>
</dbReference>
<dbReference type="SMR" id="C0Z8Y8"/>
<dbReference type="STRING" id="358681.BBR47_14810"/>
<dbReference type="KEGG" id="bbe:BBR47_14810"/>
<dbReference type="eggNOG" id="COG0217">
    <property type="taxonomic scope" value="Bacteria"/>
</dbReference>
<dbReference type="HOGENOM" id="CLU_062974_2_0_9"/>
<dbReference type="Proteomes" id="UP000001877">
    <property type="component" value="Chromosome"/>
</dbReference>
<dbReference type="GO" id="GO:0005829">
    <property type="term" value="C:cytosol"/>
    <property type="evidence" value="ECO:0007669"/>
    <property type="project" value="TreeGrafter"/>
</dbReference>
<dbReference type="GO" id="GO:0003677">
    <property type="term" value="F:DNA binding"/>
    <property type="evidence" value="ECO:0007669"/>
    <property type="project" value="UniProtKB-UniRule"/>
</dbReference>
<dbReference type="GO" id="GO:0006355">
    <property type="term" value="P:regulation of DNA-templated transcription"/>
    <property type="evidence" value="ECO:0007669"/>
    <property type="project" value="UniProtKB-UniRule"/>
</dbReference>
<dbReference type="FunFam" id="1.10.10.200:FF:000003">
    <property type="entry name" value="Probable transcriptional regulatory protein YeeN"/>
    <property type="match status" value="1"/>
</dbReference>
<dbReference type="FunFam" id="3.30.70.980:FF:000004">
    <property type="entry name" value="Probable transcriptional regulatory protein YeeN"/>
    <property type="match status" value="1"/>
</dbReference>
<dbReference type="Gene3D" id="1.10.10.200">
    <property type="match status" value="1"/>
</dbReference>
<dbReference type="Gene3D" id="3.30.70.980">
    <property type="match status" value="2"/>
</dbReference>
<dbReference type="HAMAP" id="MF_00693">
    <property type="entry name" value="Transcrip_reg_TACO1"/>
    <property type="match status" value="1"/>
</dbReference>
<dbReference type="HAMAP" id="MF_00918">
    <property type="entry name" value="Transcrip_reg_TACO1_YeeN"/>
    <property type="match status" value="1"/>
</dbReference>
<dbReference type="InterPro" id="IPR017856">
    <property type="entry name" value="Integrase-like_N"/>
</dbReference>
<dbReference type="InterPro" id="IPR048300">
    <property type="entry name" value="TACO1_YebC-like_2nd/3rd_dom"/>
</dbReference>
<dbReference type="InterPro" id="IPR049083">
    <property type="entry name" value="TACO1_YebC_N"/>
</dbReference>
<dbReference type="InterPro" id="IPR002876">
    <property type="entry name" value="Transcrip_reg_TACO1-like"/>
</dbReference>
<dbReference type="InterPro" id="IPR026564">
    <property type="entry name" value="Transcrip_reg_TACO1-like_dom3"/>
</dbReference>
<dbReference type="InterPro" id="IPR026562">
    <property type="entry name" value="Transcrip_reg_TACO1_YeeN"/>
</dbReference>
<dbReference type="InterPro" id="IPR029072">
    <property type="entry name" value="YebC-like"/>
</dbReference>
<dbReference type="NCBIfam" id="NF001030">
    <property type="entry name" value="PRK00110.1"/>
    <property type="match status" value="1"/>
</dbReference>
<dbReference type="NCBIfam" id="NF009044">
    <property type="entry name" value="PRK12378.1"/>
    <property type="match status" value="1"/>
</dbReference>
<dbReference type="NCBIfam" id="TIGR01033">
    <property type="entry name" value="YebC/PmpR family DNA-binding transcriptional regulator"/>
    <property type="match status" value="1"/>
</dbReference>
<dbReference type="PANTHER" id="PTHR12532">
    <property type="entry name" value="TRANSLATIONAL ACTIVATOR OF CYTOCHROME C OXIDASE 1"/>
    <property type="match status" value="1"/>
</dbReference>
<dbReference type="PANTHER" id="PTHR12532:SF0">
    <property type="entry name" value="TRANSLATIONAL ACTIVATOR OF CYTOCHROME C OXIDASE 1"/>
    <property type="match status" value="1"/>
</dbReference>
<dbReference type="Pfam" id="PF20772">
    <property type="entry name" value="TACO1_YebC_N"/>
    <property type="match status" value="1"/>
</dbReference>
<dbReference type="Pfam" id="PF01709">
    <property type="entry name" value="Transcrip_reg"/>
    <property type="match status" value="1"/>
</dbReference>
<dbReference type="SUPFAM" id="SSF75625">
    <property type="entry name" value="YebC-like"/>
    <property type="match status" value="1"/>
</dbReference>
<keyword id="KW-0963">Cytoplasm</keyword>
<keyword id="KW-0238">DNA-binding</keyword>
<keyword id="KW-1185">Reference proteome</keyword>
<keyword id="KW-0804">Transcription</keyword>
<keyword id="KW-0805">Transcription regulation</keyword>
<gene>
    <name type="ordered locus">BBR47_14810</name>
</gene>
<reference key="1">
    <citation type="submission" date="2005-03" db="EMBL/GenBank/DDBJ databases">
        <title>Brevibacillus brevis strain 47, complete genome.</title>
        <authorList>
            <person name="Hosoyama A."/>
            <person name="Yamada R."/>
            <person name="Hongo Y."/>
            <person name="Terui Y."/>
            <person name="Ankai A."/>
            <person name="Masuyama W."/>
            <person name="Sekiguchi M."/>
            <person name="Takeda T."/>
            <person name="Asano K."/>
            <person name="Ohji S."/>
            <person name="Ichikawa N."/>
            <person name="Narita S."/>
            <person name="Aoki N."/>
            <person name="Miura H."/>
            <person name="Matsushita S."/>
            <person name="Sekigawa T."/>
            <person name="Yamagata H."/>
            <person name="Yoshikawa H."/>
            <person name="Udaka S."/>
            <person name="Tanikawa S."/>
            <person name="Fujita N."/>
        </authorList>
    </citation>
    <scope>NUCLEOTIDE SEQUENCE [LARGE SCALE GENOMIC DNA]</scope>
    <source>
        <strain>47 / JCM 6285 / NBRC 100599</strain>
    </source>
</reference>
<accession>C0Z8Y8</accession>
<feature type="chain" id="PRO_1000200082" description="Probable transcriptional regulatory protein BBR47_14810">
    <location>
        <begin position="1"/>
        <end position="239"/>
    </location>
</feature>
<sequence>MGRKWNNIKEKKASKDASTSRIYARFGKEIYVAAKQGEPDPESNRALKVVLERAKTYSVPKAIIDRAIDKAKGGSDETFSDLRYEGFGPNGSMIIVDALTNNVNRTAPEVRAAFNKNGGNMGVSGSVAYMFDPTAVFGLEGKSSDEVLEILMEADVDVRDILEEDGAVIVYADAEQFHAVQEALKNGGVSEFTVAELTMLPQNEVTLTEDVQAQFEKLIDALEDLDDVQQVYHNVDLGE</sequence>